<dbReference type="EC" id="3.6.1.41" evidence="1"/>
<dbReference type="EMBL" id="CP000934">
    <property type="protein sequence ID" value="ACE84062.1"/>
    <property type="molecule type" value="Genomic_DNA"/>
</dbReference>
<dbReference type="RefSeq" id="WP_012486524.1">
    <property type="nucleotide sequence ID" value="NC_010995.1"/>
</dbReference>
<dbReference type="SMR" id="B3PKV6"/>
<dbReference type="STRING" id="498211.CJA_0863"/>
<dbReference type="KEGG" id="cja:CJA_0863"/>
<dbReference type="eggNOG" id="COG0639">
    <property type="taxonomic scope" value="Bacteria"/>
</dbReference>
<dbReference type="HOGENOM" id="CLU_056184_2_0_6"/>
<dbReference type="OrthoDB" id="9807890at2"/>
<dbReference type="Proteomes" id="UP000001036">
    <property type="component" value="Chromosome"/>
</dbReference>
<dbReference type="GO" id="GO:0008803">
    <property type="term" value="F:bis(5'-nucleosyl)-tetraphosphatase (symmetrical) activity"/>
    <property type="evidence" value="ECO:0007669"/>
    <property type="project" value="UniProtKB-UniRule"/>
</dbReference>
<dbReference type="CDD" id="cd07422">
    <property type="entry name" value="MPP_ApaH"/>
    <property type="match status" value="1"/>
</dbReference>
<dbReference type="Gene3D" id="3.60.21.10">
    <property type="match status" value="1"/>
</dbReference>
<dbReference type="HAMAP" id="MF_00199">
    <property type="entry name" value="ApaH"/>
    <property type="match status" value="1"/>
</dbReference>
<dbReference type="InterPro" id="IPR004617">
    <property type="entry name" value="ApaH"/>
</dbReference>
<dbReference type="InterPro" id="IPR004843">
    <property type="entry name" value="Calcineurin-like_PHP_ApaH"/>
</dbReference>
<dbReference type="InterPro" id="IPR029052">
    <property type="entry name" value="Metallo-depent_PP-like"/>
</dbReference>
<dbReference type="NCBIfam" id="TIGR00668">
    <property type="entry name" value="apaH"/>
    <property type="match status" value="1"/>
</dbReference>
<dbReference type="NCBIfam" id="NF001204">
    <property type="entry name" value="PRK00166.1"/>
    <property type="match status" value="1"/>
</dbReference>
<dbReference type="PANTHER" id="PTHR40942">
    <property type="match status" value="1"/>
</dbReference>
<dbReference type="PANTHER" id="PTHR40942:SF4">
    <property type="entry name" value="CYTOCHROME C5"/>
    <property type="match status" value="1"/>
</dbReference>
<dbReference type="Pfam" id="PF00149">
    <property type="entry name" value="Metallophos"/>
    <property type="match status" value="1"/>
</dbReference>
<dbReference type="PIRSF" id="PIRSF000903">
    <property type="entry name" value="B5n-ttraPtase_sm"/>
    <property type="match status" value="1"/>
</dbReference>
<dbReference type="SUPFAM" id="SSF56300">
    <property type="entry name" value="Metallo-dependent phosphatases"/>
    <property type="match status" value="1"/>
</dbReference>
<gene>
    <name evidence="1" type="primary">apaH</name>
    <name type="ordered locus">CJA_0863</name>
</gene>
<evidence type="ECO:0000255" key="1">
    <source>
        <dbReference type="HAMAP-Rule" id="MF_00199"/>
    </source>
</evidence>
<feature type="chain" id="PRO_1000099318" description="Bis(5'-nucleosyl)-tetraphosphatase, symmetrical">
    <location>
        <begin position="1"/>
        <end position="270"/>
    </location>
</feature>
<organism>
    <name type="scientific">Cellvibrio japonicus (strain Ueda107)</name>
    <name type="common">Pseudomonas fluorescens subsp. cellulosa</name>
    <dbReference type="NCBI Taxonomy" id="498211"/>
    <lineage>
        <taxon>Bacteria</taxon>
        <taxon>Pseudomonadati</taxon>
        <taxon>Pseudomonadota</taxon>
        <taxon>Gammaproteobacteria</taxon>
        <taxon>Cellvibrionales</taxon>
        <taxon>Cellvibrionaceae</taxon>
        <taxon>Cellvibrio</taxon>
    </lineage>
</organism>
<reference key="1">
    <citation type="journal article" date="2008" name="J. Bacteriol.">
        <title>Insights into plant cell wall degradation from the genome sequence of the soil bacterium Cellvibrio japonicus.</title>
        <authorList>
            <person name="DeBoy R.T."/>
            <person name="Mongodin E.F."/>
            <person name="Fouts D.E."/>
            <person name="Tailford L.E."/>
            <person name="Khouri H."/>
            <person name="Emerson J.B."/>
            <person name="Mohamoud Y."/>
            <person name="Watkins K."/>
            <person name="Henrissat B."/>
            <person name="Gilbert H.J."/>
            <person name="Nelson K.E."/>
        </authorList>
    </citation>
    <scope>NUCLEOTIDE SEQUENCE [LARGE SCALE GENOMIC DNA]</scope>
    <source>
        <strain>Ueda107</strain>
    </source>
</reference>
<keyword id="KW-0378">Hydrolase</keyword>
<keyword id="KW-1185">Reference proteome</keyword>
<proteinExistence type="inferred from homology"/>
<sequence>MATYAIGDIQGCYEPLQCLLEKIDFDTAKDKLWLVGDLINRGPDSLATLRFLYSIRSSLEVVLGNHDLHLLAVYFGLRKQNKSDTLTPILEAPDAPELIHWLRQQKLMHHDATLGYALVHAGIPPIWSLDKALACAREVEDYLRGPDFKTFLAHMYGNQPSVWDDSLQGQERLRLITNYFTRMRFCSADGELELTTKENAAAAPPGFAPWFSFMQRKTRQDRILFGHWAALEGQVSTANVYALDTGCVWGGYLTAMCLETGALVQCACEA</sequence>
<accession>B3PKV6</accession>
<comment type="function">
    <text evidence="1">Hydrolyzes diadenosine 5',5'''-P1,P4-tetraphosphate to yield ADP.</text>
</comment>
<comment type="catalytic activity">
    <reaction evidence="1">
        <text>P(1),P(4)-bis(5'-adenosyl) tetraphosphate + H2O = 2 ADP + 2 H(+)</text>
        <dbReference type="Rhea" id="RHEA:24252"/>
        <dbReference type="ChEBI" id="CHEBI:15377"/>
        <dbReference type="ChEBI" id="CHEBI:15378"/>
        <dbReference type="ChEBI" id="CHEBI:58141"/>
        <dbReference type="ChEBI" id="CHEBI:456216"/>
        <dbReference type="EC" id="3.6.1.41"/>
    </reaction>
</comment>
<comment type="similarity">
    <text evidence="1">Belongs to the Ap4A hydrolase family.</text>
</comment>
<name>APAH_CELJU</name>
<protein>
    <recommendedName>
        <fullName evidence="1">Bis(5'-nucleosyl)-tetraphosphatase, symmetrical</fullName>
        <ecNumber evidence="1">3.6.1.41</ecNumber>
    </recommendedName>
    <alternativeName>
        <fullName evidence="1">Ap4A hydrolase</fullName>
    </alternativeName>
    <alternativeName>
        <fullName evidence="1">Diadenosine 5',5'''-P1,P4-tetraphosphate pyrophosphohydrolase</fullName>
    </alternativeName>
    <alternativeName>
        <fullName evidence="1">Diadenosine tetraphosphatase</fullName>
    </alternativeName>
</protein>